<sequence length="312" mass="35454">MLMKKNASFEDFFLLLGFSNWPHLEVVLFVVILIFYLITLIGNLFIIILSYLDSHLHTPMYFFLSNLSFLDLCYTTSSIPQLLVNLWGPEKTISYAGCTVQLYFVLALGTAECVLLVVMSYDRYAAVCRPLHYTVLMHPRFCRLLAAASWVSGFTTSALHSSFTFWIPLCRHRLVDHFFCEVPALLRLSCVDTQANELTLMVMSSIFVLIPLILILTSYGAIARAVLSMQSTTGLQKVLRTCGAHLMVVSLFFIPVMCMYLQPPSENSQDQGKFIALFYTVVTPSLNPLIYTFRNKDVRGAVKRLMGWEWGM</sequence>
<protein>
    <recommendedName>
        <fullName>Olfactory receptor 2J1</fullName>
    </recommendedName>
    <alternativeName>
        <fullName>Hs6M1-4</fullName>
    </alternativeName>
    <alternativeName>
        <fullName>Olfactory receptor 6-5</fullName>
        <shortName>OR6-5</shortName>
    </alternativeName>
</protein>
<evidence type="ECO:0000255" key="1"/>
<evidence type="ECO:0000255" key="2">
    <source>
        <dbReference type="PROSITE-ProRule" id="PRU00521"/>
    </source>
</evidence>
<evidence type="ECO:0000269" key="3">
    <source>
    </source>
</evidence>
<evidence type="ECO:0000269" key="4">
    <source ref="1"/>
</evidence>
<evidence type="ECO:0000305" key="5"/>
<organism>
    <name type="scientific">Homo sapiens</name>
    <name type="common">Human</name>
    <dbReference type="NCBI Taxonomy" id="9606"/>
    <lineage>
        <taxon>Eukaryota</taxon>
        <taxon>Metazoa</taxon>
        <taxon>Chordata</taxon>
        <taxon>Craniata</taxon>
        <taxon>Vertebrata</taxon>
        <taxon>Euteleostomi</taxon>
        <taxon>Mammalia</taxon>
        <taxon>Eutheria</taxon>
        <taxon>Euarchontoglires</taxon>
        <taxon>Primates</taxon>
        <taxon>Haplorrhini</taxon>
        <taxon>Catarrhini</taxon>
        <taxon>Hominidae</taxon>
        <taxon>Homo</taxon>
    </lineage>
</organism>
<feature type="chain" id="PRO_0000150482" description="Olfactory receptor 2J1">
    <location>
        <begin position="1"/>
        <end position="312"/>
    </location>
</feature>
<feature type="topological domain" description="Extracellular" evidence="1">
    <location>
        <begin position="1"/>
        <end position="26"/>
    </location>
</feature>
<feature type="transmembrane region" description="Helical; Name=1" evidence="1">
    <location>
        <begin position="27"/>
        <end position="50"/>
    </location>
</feature>
<feature type="topological domain" description="Cytoplasmic" evidence="1">
    <location>
        <begin position="51"/>
        <end position="58"/>
    </location>
</feature>
<feature type="transmembrane region" description="Helical; Name=2" evidence="1">
    <location>
        <begin position="59"/>
        <end position="80"/>
    </location>
</feature>
<feature type="topological domain" description="Extracellular" evidence="1">
    <location>
        <begin position="81"/>
        <end position="101"/>
    </location>
</feature>
<feature type="transmembrane region" description="Helical; Name=3" evidence="1">
    <location>
        <begin position="102"/>
        <end position="121"/>
    </location>
</feature>
<feature type="topological domain" description="Cytoplasmic" evidence="1">
    <location>
        <begin position="122"/>
        <end position="140"/>
    </location>
</feature>
<feature type="transmembrane region" description="Helical; Name=4" evidence="1">
    <location>
        <begin position="141"/>
        <end position="159"/>
    </location>
</feature>
<feature type="topological domain" description="Extracellular" evidence="1">
    <location>
        <begin position="160"/>
        <end position="196"/>
    </location>
</feature>
<feature type="transmembrane region" description="Helical; Name=5" evidence="1">
    <location>
        <begin position="197"/>
        <end position="220"/>
    </location>
</feature>
<feature type="topological domain" description="Cytoplasmic" evidence="1">
    <location>
        <begin position="221"/>
        <end position="237"/>
    </location>
</feature>
<feature type="transmembrane region" description="Helical; Name=6" evidence="1">
    <location>
        <begin position="238"/>
        <end position="260"/>
    </location>
</feature>
<feature type="topological domain" description="Extracellular" evidence="1">
    <location>
        <begin position="261"/>
        <end position="273"/>
    </location>
</feature>
<feature type="transmembrane region" description="Helical; Name=7" evidence="1">
    <location>
        <begin position="274"/>
        <end position="293"/>
    </location>
</feature>
<feature type="topological domain" description="Cytoplasmic" evidence="1">
    <location>
        <begin position="294"/>
        <end position="312"/>
    </location>
</feature>
<feature type="glycosylation site" description="N-linked (GlcNAc...) asparagine" evidence="1">
    <location>
        <position position="6"/>
    </location>
</feature>
<feature type="disulfide bond" evidence="2">
    <location>
        <begin position="98"/>
        <end position="190"/>
    </location>
</feature>
<feature type="sequence variant" id="VAR_019066" description="In dbSNP:rs3131087." evidence="3 4">
    <original>L</original>
    <variation>I</variation>
    <location>
        <position position="14"/>
    </location>
</feature>
<keyword id="KW-1003">Cell membrane</keyword>
<keyword id="KW-1015">Disulfide bond</keyword>
<keyword id="KW-0297">G-protein coupled receptor</keyword>
<keyword id="KW-0325">Glycoprotein</keyword>
<keyword id="KW-0472">Membrane</keyword>
<keyword id="KW-0552">Olfaction</keyword>
<keyword id="KW-0675">Receptor</keyword>
<keyword id="KW-1185">Reference proteome</keyword>
<keyword id="KW-0716">Sensory transduction</keyword>
<keyword id="KW-0807">Transducer</keyword>
<keyword id="KW-0812">Transmembrane</keyword>
<keyword id="KW-1133">Transmembrane helix</keyword>
<gene>
    <name type="primary">OR2J1</name>
    <name type="synonym">OR2J1P</name>
</gene>
<dbReference type="EMBL" id="AJ302565">
    <property type="protein sequence ID" value="CAC20485.1"/>
    <property type="molecule type" value="Genomic_DNA"/>
</dbReference>
<dbReference type="EMBL" id="AJ302566">
    <property type="protein sequence ID" value="CAC20486.1"/>
    <property type="molecule type" value="Genomic_DNA"/>
</dbReference>
<dbReference type="EMBL" id="AJ302567">
    <property type="protein sequence ID" value="CAC20487.1"/>
    <property type="molecule type" value="Genomic_DNA"/>
</dbReference>
<dbReference type="EMBL" id="AJ302568">
    <property type="protein sequence ID" value="CAC20488.1"/>
    <property type="molecule type" value="Genomic_DNA"/>
</dbReference>
<dbReference type="EMBL" id="AJ302569">
    <property type="protein sequence ID" value="CAC20489.1"/>
    <property type="molecule type" value="Genomic_DNA"/>
</dbReference>
<dbReference type="EMBL" id="AJ302570">
    <property type="protein sequence ID" value="CAC20490.1"/>
    <property type="molecule type" value="Genomic_DNA"/>
</dbReference>
<dbReference type="EMBL" id="AL645937">
    <property type="status" value="NOT_ANNOTATED_CDS"/>
    <property type="molecule type" value="Genomic_DNA"/>
</dbReference>
<dbReference type="EMBL" id="CR933783">
    <property type="status" value="NOT_ANNOTATED_CDS"/>
    <property type="molecule type" value="Genomic_DNA"/>
</dbReference>
<dbReference type="CCDS" id="CCDS87377.1"/>
<dbReference type="RefSeq" id="NP_001335223.1">
    <property type="nucleotide sequence ID" value="NM_001348294.2"/>
</dbReference>
<dbReference type="SMR" id="Q9GZK6"/>
<dbReference type="FunCoup" id="Q9GZK6">
    <property type="interactions" value="448"/>
</dbReference>
<dbReference type="STRING" id="9606.ENSP00000493312"/>
<dbReference type="GlyCosmos" id="Q9GZK6">
    <property type="glycosylation" value="1 site, No reported glycans"/>
</dbReference>
<dbReference type="GlyGen" id="Q9GZK6">
    <property type="glycosylation" value="2 sites"/>
</dbReference>
<dbReference type="BioMuta" id="OR2J1"/>
<dbReference type="DMDM" id="147744582"/>
<dbReference type="PeptideAtlas" id="Q9GZK6"/>
<dbReference type="Antibodypedia" id="82189">
    <property type="antibodies" value="3 antibodies from 3 providers"/>
</dbReference>
<dbReference type="DNASU" id="442185"/>
<dbReference type="Ensembl" id="ENST00000377171.3">
    <property type="protein sequence ID" value="ENSP00000366376.3"/>
    <property type="gene ID" value="ENSG00000204702.6"/>
</dbReference>
<dbReference type="Ensembl" id="ENST00000427659.2">
    <property type="protein sequence ID" value="ENSP00000414527.2"/>
    <property type="gene ID" value="ENSG00000226931.2"/>
</dbReference>
<dbReference type="Ensembl" id="ENST00000641659.2">
    <property type="protein sequence ID" value="ENSP00000493312.1"/>
    <property type="gene ID" value="ENSG00000204702.6"/>
</dbReference>
<dbReference type="GeneID" id="442185"/>
<dbReference type="KEGG" id="hsa:442185"/>
<dbReference type="MANE-Select" id="ENST00000641659.2">
    <property type="protein sequence ID" value="ENSP00000493312.1"/>
    <property type="RefSeq nucleotide sequence ID" value="NM_001348294.2"/>
    <property type="RefSeq protein sequence ID" value="NP_001335223.1"/>
</dbReference>
<dbReference type="UCSC" id="uc063mmp.1">
    <property type="organism name" value="human"/>
</dbReference>
<dbReference type="AGR" id="HGNC:8259"/>
<dbReference type="CTD" id="442185"/>
<dbReference type="GeneCards" id="OR2J1"/>
<dbReference type="HGNC" id="HGNC:8259">
    <property type="gene designation" value="OR2J1"/>
</dbReference>
<dbReference type="HPA" id="ENSG00000204702">
    <property type="expression patterns" value="Not detected"/>
</dbReference>
<dbReference type="neXtProt" id="NX_Q9GZK6"/>
<dbReference type="VEuPathDB" id="HostDB:ENSG00000204702"/>
<dbReference type="GeneTree" id="ENSGT01130000278266"/>
<dbReference type="HOGENOM" id="CLU_012526_1_2_1"/>
<dbReference type="InParanoid" id="Q9GZK6"/>
<dbReference type="OMA" id="MGWEWGI"/>
<dbReference type="OrthoDB" id="5950740at2759"/>
<dbReference type="PAN-GO" id="Q9GZK6">
    <property type="GO annotations" value="0 GO annotations based on evolutionary models"/>
</dbReference>
<dbReference type="PhylomeDB" id="Q9GZK6"/>
<dbReference type="TreeFam" id="TF336512"/>
<dbReference type="PathwayCommons" id="Q9GZK6"/>
<dbReference type="Reactome" id="R-HSA-381753">
    <property type="pathway name" value="Olfactory Signaling Pathway"/>
</dbReference>
<dbReference type="Reactome" id="R-HSA-9752946">
    <property type="pathway name" value="Expression and translocation of olfactory receptors"/>
</dbReference>
<dbReference type="BioGRID-ORCS" id="442185">
    <property type="hits" value="1 hit in 38 CRISPR screens"/>
</dbReference>
<dbReference type="GenomeRNAi" id="442185"/>
<dbReference type="Pharos" id="Q9GZK6">
    <property type="development level" value="Tdark"/>
</dbReference>
<dbReference type="PRO" id="PR:Q9GZK6"/>
<dbReference type="Proteomes" id="UP000005640">
    <property type="component" value="Chromosome 6"/>
</dbReference>
<dbReference type="RNAct" id="Q9GZK6">
    <property type="molecule type" value="protein"/>
</dbReference>
<dbReference type="Bgee" id="ENSG00000204702">
    <property type="expression patterns" value="Expressed in male germ line stem cell (sensu Vertebrata) in testis"/>
</dbReference>
<dbReference type="GO" id="GO:0005886">
    <property type="term" value="C:plasma membrane"/>
    <property type="evidence" value="ECO:0000318"/>
    <property type="project" value="GO_Central"/>
</dbReference>
<dbReference type="GO" id="GO:0004930">
    <property type="term" value="F:G protein-coupled receptor activity"/>
    <property type="evidence" value="ECO:0007669"/>
    <property type="project" value="UniProtKB-KW"/>
</dbReference>
<dbReference type="GO" id="GO:0004984">
    <property type="term" value="F:olfactory receptor activity"/>
    <property type="evidence" value="ECO:0000318"/>
    <property type="project" value="GO_Central"/>
</dbReference>
<dbReference type="GO" id="GO:0050911">
    <property type="term" value="P:detection of chemical stimulus involved in sensory perception of smell"/>
    <property type="evidence" value="ECO:0000318"/>
    <property type="project" value="GO_Central"/>
</dbReference>
<dbReference type="CDD" id="cd15947">
    <property type="entry name" value="7tmA_OR2B-like"/>
    <property type="match status" value="1"/>
</dbReference>
<dbReference type="FunFam" id="1.20.1070.10:FF:000005">
    <property type="entry name" value="Olfactory receptor"/>
    <property type="match status" value="1"/>
</dbReference>
<dbReference type="Gene3D" id="1.20.1070.10">
    <property type="entry name" value="Rhodopsin 7-helix transmembrane proteins"/>
    <property type="match status" value="1"/>
</dbReference>
<dbReference type="InterPro" id="IPR000276">
    <property type="entry name" value="GPCR_Rhodpsn"/>
</dbReference>
<dbReference type="InterPro" id="IPR017452">
    <property type="entry name" value="GPCR_Rhodpsn_7TM"/>
</dbReference>
<dbReference type="InterPro" id="IPR000725">
    <property type="entry name" value="Olfact_rcpt"/>
</dbReference>
<dbReference type="PANTHER" id="PTHR26453">
    <property type="entry name" value="OLFACTORY RECEPTOR"/>
    <property type="match status" value="1"/>
</dbReference>
<dbReference type="Pfam" id="PF13853">
    <property type="entry name" value="7tm_4"/>
    <property type="match status" value="1"/>
</dbReference>
<dbReference type="PRINTS" id="PR00237">
    <property type="entry name" value="GPCRRHODOPSN"/>
</dbReference>
<dbReference type="PRINTS" id="PR00245">
    <property type="entry name" value="OLFACTORYR"/>
</dbReference>
<dbReference type="SUPFAM" id="SSF81321">
    <property type="entry name" value="Family A G protein-coupled receptor-like"/>
    <property type="match status" value="1"/>
</dbReference>
<dbReference type="PROSITE" id="PS00237">
    <property type="entry name" value="G_PROTEIN_RECEP_F1_1"/>
    <property type="match status" value="1"/>
</dbReference>
<dbReference type="PROSITE" id="PS50262">
    <property type="entry name" value="G_PROTEIN_RECEP_F1_2"/>
    <property type="match status" value="1"/>
</dbReference>
<comment type="function">
    <text evidence="5">Odorant receptor.</text>
</comment>
<comment type="subcellular location">
    <subcellularLocation>
        <location>Cell membrane</location>
        <topology>Multi-pass membrane protein</topology>
    </subcellularLocation>
</comment>
<comment type="polymorphism">
    <text>A stop codon in the gene coding for this protein at position Gln-194 is responsible for functional diversity thus producing a pseudogene. The stop codon is more frequent in non-Africans than in African-Americans.</text>
</comment>
<comment type="similarity">
    <text evidence="2">Belongs to the G-protein coupled receptor 1 family.</text>
</comment>
<comment type="online information" name="Human Olfactory Receptor Data Exploratorium (HORDE)">
    <link uri="http://genome.weizmann.ac.il/horde/card/index/symbol:OR2J1"/>
</comment>
<accession>Q9GZK6</accession>
<accession>A2AAS1</accession>
<accession>B0V1T2</accession>
<accession>Q9GZK1</accession>
<reference key="1">
    <citation type="book" date="2000" name="Major histocompatibility complex-evolution, structure, and function">
        <title>Polymorphic olfactory receptor genes and HLA loci constitute extended haplotypes.</title>
        <editorList>
            <person name="Kasahara M."/>
        </editorList>
        <authorList>
            <person name="Ziegler A."/>
            <person name="Ehlers A."/>
            <person name="Forbes S.A."/>
            <person name="Trowsdale J."/>
            <person name="Uchanska-Ziegler B."/>
            <person name="Volz A."/>
            <person name="Younger R."/>
            <person name="Beck S."/>
        </authorList>
    </citation>
    <scope>NUCLEOTIDE SEQUENCE [GENOMIC DNA]</scope>
    <scope>VARIANT ILE-14</scope>
</reference>
<reference key="2">
    <citation type="journal article" date="2003" name="Nature">
        <title>The DNA sequence and analysis of human chromosome 6.</title>
        <authorList>
            <person name="Mungall A.J."/>
            <person name="Palmer S.A."/>
            <person name="Sims S.K."/>
            <person name="Edwards C.A."/>
            <person name="Ashurst J.L."/>
            <person name="Wilming L."/>
            <person name="Jones M.C."/>
            <person name="Horton R."/>
            <person name="Hunt S.E."/>
            <person name="Scott C.E."/>
            <person name="Gilbert J.G.R."/>
            <person name="Clamp M.E."/>
            <person name="Bethel G."/>
            <person name="Milne S."/>
            <person name="Ainscough R."/>
            <person name="Almeida J.P."/>
            <person name="Ambrose K.D."/>
            <person name="Andrews T.D."/>
            <person name="Ashwell R.I.S."/>
            <person name="Babbage A.K."/>
            <person name="Bagguley C.L."/>
            <person name="Bailey J."/>
            <person name="Banerjee R."/>
            <person name="Barker D.J."/>
            <person name="Barlow K.F."/>
            <person name="Bates K."/>
            <person name="Beare D.M."/>
            <person name="Beasley H."/>
            <person name="Beasley O."/>
            <person name="Bird C.P."/>
            <person name="Blakey S.E."/>
            <person name="Bray-Allen S."/>
            <person name="Brook J."/>
            <person name="Brown A.J."/>
            <person name="Brown J.Y."/>
            <person name="Burford D.C."/>
            <person name="Burrill W."/>
            <person name="Burton J."/>
            <person name="Carder C."/>
            <person name="Carter N.P."/>
            <person name="Chapman J.C."/>
            <person name="Clark S.Y."/>
            <person name="Clark G."/>
            <person name="Clee C.M."/>
            <person name="Clegg S."/>
            <person name="Cobley V."/>
            <person name="Collier R.E."/>
            <person name="Collins J.E."/>
            <person name="Colman L.K."/>
            <person name="Corby N.R."/>
            <person name="Coville G.J."/>
            <person name="Culley K.M."/>
            <person name="Dhami P."/>
            <person name="Davies J."/>
            <person name="Dunn M."/>
            <person name="Earthrowl M.E."/>
            <person name="Ellington A.E."/>
            <person name="Evans K.A."/>
            <person name="Faulkner L."/>
            <person name="Francis M.D."/>
            <person name="Frankish A."/>
            <person name="Frankland J."/>
            <person name="French L."/>
            <person name="Garner P."/>
            <person name="Garnett J."/>
            <person name="Ghori M.J."/>
            <person name="Gilby L.M."/>
            <person name="Gillson C.J."/>
            <person name="Glithero R.J."/>
            <person name="Grafham D.V."/>
            <person name="Grant M."/>
            <person name="Gribble S."/>
            <person name="Griffiths C."/>
            <person name="Griffiths M.N.D."/>
            <person name="Hall R."/>
            <person name="Halls K.S."/>
            <person name="Hammond S."/>
            <person name="Harley J.L."/>
            <person name="Hart E.A."/>
            <person name="Heath P.D."/>
            <person name="Heathcott R."/>
            <person name="Holmes S.J."/>
            <person name="Howden P.J."/>
            <person name="Howe K.L."/>
            <person name="Howell G.R."/>
            <person name="Huckle E."/>
            <person name="Humphray S.J."/>
            <person name="Humphries M.D."/>
            <person name="Hunt A.R."/>
            <person name="Johnson C.M."/>
            <person name="Joy A.A."/>
            <person name="Kay M."/>
            <person name="Keenan S.J."/>
            <person name="Kimberley A.M."/>
            <person name="King A."/>
            <person name="Laird G.K."/>
            <person name="Langford C."/>
            <person name="Lawlor S."/>
            <person name="Leongamornlert D.A."/>
            <person name="Leversha M."/>
            <person name="Lloyd C.R."/>
            <person name="Lloyd D.M."/>
            <person name="Loveland J.E."/>
            <person name="Lovell J."/>
            <person name="Martin S."/>
            <person name="Mashreghi-Mohammadi M."/>
            <person name="Maslen G.L."/>
            <person name="Matthews L."/>
            <person name="McCann O.T."/>
            <person name="McLaren S.J."/>
            <person name="McLay K."/>
            <person name="McMurray A."/>
            <person name="Moore M.J.F."/>
            <person name="Mullikin J.C."/>
            <person name="Niblett D."/>
            <person name="Nickerson T."/>
            <person name="Novik K.L."/>
            <person name="Oliver K."/>
            <person name="Overton-Larty E.K."/>
            <person name="Parker A."/>
            <person name="Patel R."/>
            <person name="Pearce A.V."/>
            <person name="Peck A.I."/>
            <person name="Phillimore B.J.C.T."/>
            <person name="Phillips S."/>
            <person name="Plumb R.W."/>
            <person name="Porter K.M."/>
            <person name="Ramsey Y."/>
            <person name="Ranby S.A."/>
            <person name="Rice C.M."/>
            <person name="Ross M.T."/>
            <person name="Searle S.M."/>
            <person name="Sehra H.K."/>
            <person name="Sheridan E."/>
            <person name="Skuce C.D."/>
            <person name="Smith S."/>
            <person name="Smith M."/>
            <person name="Spraggon L."/>
            <person name="Squares S.L."/>
            <person name="Steward C.A."/>
            <person name="Sycamore N."/>
            <person name="Tamlyn-Hall G."/>
            <person name="Tester J."/>
            <person name="Theaker A.J."/>
            <person name="Thomas D.W."/>
            <person name="Thorpe A."/>
            <person name="Tracey A."/>
            <person name="Tromans A."/>
            <person name="Tubby B."/>
            <person name="Wall M."/>
            <person name="Wallis J.M."/>
            <person name="West A.P."/>
            <person name="White S.S."/>
            <person name="Whitehead S.L."/>
            <person name="Whittaker H."/>
            <person name="Wild A."/>
            <person name="Willey D.J."/>
            <person name="Wilmer T.E."/>
            <person name="Wood J.M."/>
            <person name="Wray P.W."/>
            <person name="Wyatt J.C."/>
            <person name="Young L."/>
            <person name="Younger R.M."/>
            <person name="Bentley D.R."/>
            <person name="Coulson A."/>
            <person name="Durbin R.M."/>
            <person name="Hubbard T."/>
            <person name="Sulston J.E."/>
            <person name="Dunham I."/>
            <person name="Rogers J."/>
            <person name="Beck S."/>
        </authorList>
    </citation>
    <scope>NUCLEOTIDE SEQUENCE [LARGE SCALE GENOMIC DNA]</scope>
    <scope>VARIANT ILE-14</scope>
</reference>
<reference key="3">
    <citation type="journal article" date="2003" name="Nat. Genet.">
        <title>Different noses for different people.</title>
        <authorList>
            <person name="Menashe I."/>
            <person name="Man O."/>
            <person name="Lancet D."/>
            <person name="Gilad Y."/>
        </authorList>
    </citation>
    <scope>POLYMORPHISM</scope>
</reference>
<name>OR2J1_HUMAN</name>
<proteinExistence type="inferred from homology"/>